<name>AKB1C_ARATH</name>
<accession>Q9LJH2</accession>
<accession>A0A178VFK0</accession>
<accession>Q8H117</accession>
<accession>Q94K86</accession>
<feature type="chain" id="PRO_0000460628" description="DNA N(6)-methyladenine demethylase ALKBH1C">
    <location>
        <begin position="1"/>
        <end position="455"/>
    </location>
</feature>
<feature type="domain" description="Fe2OG dioxygenase" evidence="3">
    <location>
        <begin position="345"/>
        <end position="455"/>
    </location>
</feature>
<feature type="region of interest" description="Disordered" evidence="4">
    <location>
        <begin position="1"/>
        <end position="114"/>
    </location>
</feature>
<feature type="region of interest" description="Disordered" evidence="4">
    <location>
        <begin position="173"/>
        <end position="194"/>
    </location>
</feature>
<feature type="binding site" evidence="2">
    <location>
        <begin position="352"/>
        <end position="354"/>
    </location>
    <ligand>
        <name>2-oxoglutarate</name>
        <dbReference type="ChEBI" id="CHEBI:16810"/>
    </ligand>
</feature>
<feature type="binding site" evidence="3">
    <location>
        <position position="363"/>
    </location>
    <ligand>
        <name>Fe cation</name>
        <dbReference type="ChEBI" id="CHEBI:24875"/>
        <note>catalytic</note>
    </ligand>
</feature>
<feature type="binding site" evidence="3">
    <location>
        <position position="365"/>
    </location>
    <ligand>
        <name>Fe cation</name>
        <dbReference type="ChEBI" id="CHEBI:24875"/>
        <note>catalytic</note>
    </ligand>
</feature>
<feature type="binding site" evidence="3">
    <location>
        <position position="423"/>
    </location>
    <ligand>
        <name>Fe cation</name>
        <dbReference type="ChEBI" id="CHEBI:24875"/>
        <note>catalytic</note>
    </ligand>
</feature>
<feature type="binding site" evidence="2">
    <location>
        <begin position="447"/>
        <end position="453"/>
    </location>
    <ligand>
        <name>2-oxoglutarate</name>
        <dbReference type="ChEBI" id="CHEBI:16810"/>
    </ligand>
</feature>
<proteinExistence type="evidence at protein level"/>
<dbReference type="EC" id="1.14.11.51" evidence="5"/>
<dbReference type="EMBL" id="AP000600">
    <property type="protein sequence ID" value="BAB02980.1"/>
    <property type="molecule type" value="Genomic_DNA"/>
</dbReference>
<dbReference type="EMBL" id="CP002686">
    <property type="protein sequence ID" value="AEE75479.1"/>
    <property type="molecule type" value="Genomic_DNA"/>
</dbReference>
<dbReference type="EMBL" id="BT000892">
    <property type="protein sequence ID" value="AAN41292.1"/>
    <property type="molecule type" value="mRNA"/>
</dbReference>
<dbReference type="EMBL" id="AF370191">
    <property type="protein sequence ID" value="AAK44006.2"/>
    <property type="molecule type" value="mRNA"/>
</dbReference>
<dbReference type="RefSeq" id="NP_566479.5">
    <property type="nucleotide sequence ID" value="NM_112272.6"/>
</dbReference>
<dbReference type="SMR" id="Q9LJH2"/>
<dbReference type="FunCoup" id="Q9LJH2">
    <property type="interactions" value="307"/>
</dbReference>
<dbReference type="STRING" id="3702.Q9LJH2"/>
<dbReference type="iPTMnet" id="Q9LJH2"/>
<dbReference type="PaxDb" id="3702-AT3G14160.1"/>
<dbReference type="ProteomicsDB" id="177016"/>
<dbReference type="EnsemblPlants" id="AT3G14160.1">
    <property type="protein sequence ID" value="AT3G14160.1"/>
    <property type="gene ID" value="AT3G14160"/>
</dbReference>
<dbReference type="GeneID" id="820633"/>
<dbReference type="Gramene" id="AT3G14160.1">
    <property type="protein sequence ID" value="AT3G14160.1"/>
    <property type="gene ID" value="AT3G14160"/>
</dbReference>
<dbReference type="KEGG" id="ath:AT3G14160"/>
<dbReference type="Araport" id="AT3G14160"/>
<dbReference type="TAIR" id="AT3G14160"/>
<dbReference type="eggNOG" id="KOG2731">
    <property type="taxonomic scope" value="Eukaryota"/>
</dbReference>
<dbReference type="HOGENOM" id="CLU_039677_3_0_1"/>
<dbReference type="OMA" id="ICLEKKW"/>
<dbReference type="OrthoDB" id="6614653at2759"/>
<dbReference type="Proteomes" id="UP000006548">
    <property type="component" value="Chromosome 3"/>
</dbReference>
<dbReference type="ExpressionAtlas" id="Q9LJH2">
    <property type="expression patterns" value="baseline and differential"/>
</dbReference>
<dbReference type="GO" id="GO:0005737">
    <property type="term" value="C:cytoplasm"/>
    <property type="evidence" value="ECO:0000250"/>
    <property type="project" value="UniProtKB"/>
</dbReference>
<dbReference type="GO" id="GO:0005634">
    <property type="term" value="C:nucleus"/>
    <property type="evidence" value="ECO:0000250"/>
    <property type="project" value="UniProtKB"/>
</dbReference>
<dbReference type="GO" id="GO:0141131">
    <property type="term" value="F:DNA N6-methyladenine demethylase activity"/>
    <property type="evidence" value="ECO:0000314"/>
    <property type="project" value="UniProtKB"/>
</dbReference>
<dbReference type="GO" id="GO:0046872">
    <property type="term" value="F:metal ion binding"/>
    <property type="evidence" value="ECO:0007669"/>
    <property type="project" value="UniProtKB-KW"/>
</dbReference>
<dbReference type="GO" id="GO:0006281">
    <property type="term" value="P:DNA repair"/>
    <property type="evidence" value="ECO:0007669"/>
    <property type="project" value="UniProtKB-KW"/>
</dbReference>
<dbReference type="FunFam" id="2.60.120.590:FF:000013">
    <property type="entry name" value="2-oxoglutarate-dependent dioxygenase family protein"/>
    <property type="match status" value="1"/>
</dbReference>
<dbReference type="Gene3D" id="2.60.120.590">
    <property type="entry name" value="Alpha-ketoglutarate-dependent dioxygenase AlkB-like"/>
    <property type="match status" value="1"/>
</dbReference>
<dbReference type="InterPro" id="IPR004574">
    <property type="entry name" value="Alkb"/>
</dbReference>
<dbReference type="InterPro" id="IPR027450">
    <property type="entry name" value="AlkB-like"/>
</dbReference>
<dbReference type="InterPro" id="IPR037151">
    <property type="entry name" value="AlkB-like_sf"/>
</dbReference>
<dbReference type="InterPro" id="IPR005123">
    <property type="entry name" value="Oxoglu/Fe-dep_dioxygenase_dom"/>
</dbReference>
<dbReference type="PANTHER" id="PTHR16557">
    <property type="entry name" value="ALKYLATED DNA REPAIR PROTEIN ALKB-RELATED"/>
    <property type="match status" value="1"/>
</dbReference>
<dbReference type="PANTHER" id="PTHR16557:SF2">
    <property type="entry name" value="NUCLEIC ACID DIOXYGENASE ALKBH1"/>
    <property type="match status" value="1"/>
</dbReference>
<dbReference type="Pfam" id="PF13532">
    <property type="entry name" value="2OG-FeII_Oxy_2"/>
    <property type="match status" value="1"/>
</dbReference>
<dbReference type="SUPFAM" id="SSF51197">
    <property type="entry name" value="Clavaminate synthase-like"/>
    <property type="match status" value="1"/>
</dbReference>
<dbReference type="PROSITE" id="PS51471">
    <property type="entry name" value="FE2OG_OXY"/>
    <property type="match status" value="1"/>
</dbReference>
<evidence type="ECO:0000250" key="1">
    <source>
        <dbReference type="UniProtKB" id="F4KAV2"/>
    </source>
</evidence>
<evidence type="ECO:0000250" key="2">
    <source>
        <dbReference type="UniProtKB" id="P05050"/>
    </source>
</evidence>
<evidence type="ECO:0000255" key="3">
    <source>
        <dbReference type="PROSITE-ProRule" id="PRU00805"/>
    </source>
</evidence>
<evidence type="ECO:0000256" key="4">
    <source>
        <dbReference type="SAM" id="MobiDB-lite"/>
    </source>
</evidence>
<evidence type="ECO:0000269" key="5">
    <source>
    </source>
</evidence>
<evidence type="ECO:0000303" key="6">
    <source>
    </source>
</evidence>
<evidence type="ECO:0000305" key="7"/>
<evidence type="ECO:0000305" key="8">
    <source>
    </source>
</evidence>
<evidence type="ECO:0000312" key="9">
    <source>
        <dbReference type="Araport" id="AT3G14160"/>
    </source>
</evidence>
<evidence type="ECO:0000312" key="10">
    <source>
        <dbReference type="EMBL" id="BAB02980.1"/>
    </source>
</evidence>
<comment type="function">
    <text evidence="5">Dioxygenase that catalyzes DNA N(6)-methyladenine (6 mA) demethylation with a low efficiency (PubMed:38432357).</text>
</comment>
<comment type="catalytic activity">
    <reaction evidence="5">
        <text>an N(6)-methyl-2'-deoxyadenosine in DNA + 2-oxoglutarate + O2 = a 2'-deoxyadenosine in DNA + formaldehyde + succinate + CO2</text>
        <dbReference type="Rhea" id="RHEA:49524"/>
        <dbReference type="Rhea" id="RHEA-COMP:12418"/>
        <dbReference type="Rhea" id="RHEA-COMP:12419"/>
        <dbReference type="ChEBI" id="CHEBI:15379"/>
        <dbReference type="ChEBI" id="CHEBI:16526"/>
        <dbReference type="ChEBI" id="CHEBI:16810"/>
        <dbReference type="ChEBI" id="CHEBI:16842"/>
        <dbReference type="ChEBI" id="CHEBI:30031"/>
        <dbReference type="ChEBI" id="CHEBI:90615"/>
        <dbReference type="ChEBI" id="CHEBI:90616"/>
        <dbReference type="EC" id="1.14.11.51"/>
    </reaction>
    <physiologicalReaction direction="left-to-right" evidence="5">
        <dbReference type="Rhea" id="RHEA:49525"/>
    </physiologicalReaction>
</comment>
<comment type="cofactor">
    <cofactor evidence="3">
        <name>Fe(2+)</name>
        <dbReference type="ChEBI" id="CHEBI:29033"/>
    </cofactor>
    <text evidence="3">Binds 1 Fe(2+) ion per subunit.</text>
</comment>
<comment type="subcellular location">
    <subcellularLocation>
        <location evidence="1">Nucleus</location>
    </subcellularLocation>
    <subcellularLocation>
        <location evidence="1">Cytoplasm</location>
    </subcellularLocation>
</comment>
<comment type="tissue specificity">
    <text evidence="5">Expressed at low levels in roots and seedlings, but barely in cauline leaves, rosette leaves, stems, siliques and flowers.</text>
</comment>
<comment type="similarity">
    <text evidence="7">Belongs to the alkB family.</text>
</comment>
<sequence>MNHSEARGSGGHKGYRGRSQASEQWVPVAADDKSLEDSSGNRVRGSQGKGRSRTSWSPRNSYGRGNDEHSPVQAYVNKSNVGFVEKGVQQDRKSLEDGIGSTKQPDDGAAAGDNKAVLQSKSTNVSGGSFVSSECEDKDGAKMYCDLVNRVNDVTLSCQESVSSTVVQKVELSSVEDQKSAPKADGAGNSSNESSTRHFDIFLEKKGIVLKPNLLVLSREKKKAAKGYSGTVIRPGMVLLKNYLSINDQVMIVNKCRRLGLGEGGFYQPGYRDEAKLHLKMMCLGKNWDPETSRYGETRPFDGSTAPRIPAEFNQFVEKAVKESQSLAASNSKQTKGGDEIPFMLPDICIVNFYSSTGRLGLHQDKDESENSIRKGLPVVSFSIGDSAEFLYGDQRDEDKAETLTLESGDVLLFGGRSRKVFHGVRSIRKDTAPKALLQETSLRPGRLNLTFRQY</sequence>
<protein>
    <recommendedName>
        <fullName evidence="6">DNA N(6)-methyladenine demethylase ALKBH1C</fullName>
        <shortName evidence="6">DNA 6 mA demethylase ALKBH1C</shortName>
        <ecNumber evidence="5">1.14.11.51</ecNumber>
    </recommendedName>
    <alternativeName>
        <fullName evidence="6">Alkylated DNA repair protein alkB homolog 1C</fullName>
        <shortName evidence="6">AtALKBH1C</shortName>
        <shortName evidence="8">Protein alkB homolog 1C</shortName>
    </alternativeName>
    <alternativeName>
        <fullName evidence="6">Alpha-ketoglutarate-dependent dioxygenase ALKBH1C</fullName>
    </alternativeName>
</protein>
<reference key="1">
    <citation type="journal article" date="2000" name="DNA Res.">
        <title>Structural analysis of Arabidopsis thaliana chromosome 3. II. Sequence features of the 4,251,695 bp regions covered by 90 P1, TAC and BAC clones.</title>
        <authorList>
            <person name="Kaneko T."/>
            <person name="Katoh T."/>
            <person name="Sato S."/>
            <person name="Nakamura Y."/>
            <person name="Asamizu E."/>
            <person name="Tabata S."/>
        </authorList>
    </citation>
    <scope>NUCLEOTIDE SEQUENCE [LARGE SCALE GENOMIC DNA]</scope>
    <source>
        <strain>cv. Columbia</strain>
    </source>
</reference>
<reference key="2">
    <citation type="journal article" date="2017" name="Plant J.">
        <title>Araport11: a complete reannotation of the Arabidopsis thaliana reference genome.</title>
        <authorList>
            <person name="Cheng C.Y."/>
            <person name="Krishnakumar V."/>
            <person name="Chan A.P."/>
            <person name="Thibaud-Nissen F."/>
            <person name="Schobel S."/>
            <person name="Town C.D."/>
        </authorList>
    </citation>
    <scope>GENOME REANNOTATION</scope>
    <source>
        <strain>cv. Columbia</strain>
    </source>
</reference>
<reference key="3">
    <citation type="journal article" date="2003" name="Science">
        <title>Empirical analysis of transcriptional activity in the Arabidopsis genome.</title>
        <authorList>
            <person name="Yamada K."/>
            <person name="Lim J."/>
            <person name="Dale J.M."/>
            <person name="Chen H."/>
            <person name="Shinn P."/>
            <person name="Palm C.J."/>
            <person name="Southwick A.M."/>
            <person name="Wu H.C."/>
            <person name="Kim C.J."/>
            <person name="Nguyen M."/>
            <person name="Pham P.K."/>
            <person name="Cheuk R.F."/>
            <person name="Karlin-Newmann G."/>
            <person name="Liu S.X."/>
            <person name="Lam B."/>
            <person name="Sakano H."/>
            <person name="Wu T."/>
            <person name="Yu G."/>
            <person name="Miranda M."/>
            <person name="Quach H.L."/>
            <person name="Tripp M."/>
            <person name="Chang C.H."/>
            <person name="Lee J.M."/>
            <person name="Toriumi M.J."/>
            <person name="Chan M.M."/>
            <person name="Tang C.C."/>
            <person name="Onodera C.S."/>
            <person name="Deng J.M."/>
            <person name="Akiyama K."/>
            <person name="Ansari Y."/>
            <person name="Arakawa T."/>
            <person name="Banh J."/>
            <person name="Banno F."/>
            <person name="Bowser L."/>
            <person name="Brooks S.Y."/>
            <person name="Carninci P."/>
            <person name="Chao Q."/>
            <person name="Choy N."/>
            <person name="Enju A."/>
            <person name="Goldsmith A.D."/>
            <person name="Gurjal M."/>
            <person name="Hansen N.F."/>
            <person name="Hayashizaki Y."/>
            <person name="Johnson-Hopson C."/>
            <person name="Hsuan V.W."/>
            <person name="Iida K."/>
            <person name="Karnes M."/>
            <person name="Khan S."/>
            <person name="Koesema E."/>
            <person name="Ishida J."/>
            <person name="Jiang P.X."/>
            <person name="Jones T."/>
            <person name="Kawai J."/>
            <person name="Kamiya A."/>
            <person name="Meyers C."/>
            <person name="Nakajima M."/>
            <person name="Narusaka M."/>
            <person name="Seki M."/>
            <person name="Sakurai T."/>
            <person name="Satou M."/>
            <person name="Tamse R."/>
            <person name="Vaysberg M."/>
            <person name="Wallender E.K."/>
            <person name="Wong C."/>
            <person name="Yamamura Y."/>
            <person name="Yuan S."/>
            <person name="Shinozaki K."/>
            <person name="Davis R.W."/>
            <person name="Theologis A."/>
            <person name="Ecker J.R."/>
        </authorList>
    </citation>
    <scope>NUCLEOTIDE SEQUENCE [LARGE SCALE MRNA] OF 143-455</scope>
    <source>
        <strain>cv. Columbia</strain>
    </source>
</reference>
<reference key="4">
    <citation type="journal article" date="2024" name="Plant Sci.">
        <title>Identification of AtALKBH1A and AtALKBH1D as DNA N6-adenine demethylases in Arabidopsis thaliana.</title>
        <authorList>
            <person name="Li D."/>
            <person name="Du J."/>
            <person name="Gao M."/>
            <person name="He C."/>
        </authorList>
    </citation>
    <scope>FUNCTION</scope>
    <scope>CATALYTIC ACTIVITY</scope>
    <scope>TISSUE SPECIFICITY</scope>
    <scope>GENE FAMILY</scope>
    <scope>NOMENCLATURE</scope>
    <source>
        <strain>cv. Columbia</strain>
    </source>
</reference>
<keyword id="KW-0963">Cytoplasm</keyword>
<keyword id="KW-0223">Dioxygenase</keyword>
<keyword id="KW-0227">DNA damage</keyword>
<keyword id="KW-0234">DNA repair</keyword>
<keyword id="KW-0408">Iron</keyword>
<keyword id="KW-0479">Metal-binding</keyword>
<keyword id="KW-0539">Nucleus</keyword>
<keyword id="KW-0560">Oxidoreductase</keyword>
<keyword id="KW-1185">Reference proteome</keyword>
<gene>
    <name evidence="6" type="primary">ALKBH1C</name>
    <name evidence="9" type="ordered locus">At3g14160</name>
    <name evidence="10" type="ORF">MAG2.12</name>
</gene>
<organism>
    <name type="scientific">Arabidopsis thaliana</name>
    <name type="common">Mouse-ear cress</name>
    <dbReference type="NCBI Taxonomy" id="3702"/>
    <lineage>
        <taxon>Eukaryota</taxon>
        <taxon>Viridiplantae</taxon>
        <taxon>Streptophyta</taxon>
        <taxon>Embryophyta</taxon>
        <taxon>Tracheophyta</taxon>
        <taxon>Spermatophyta</taxon>
        <taxon>Magnoliopsida</taxon>
        <taxon>eudicotyledons</taxon>
        <taxon>Gunneridae</taxon>
        <taxon>Pentapetalae</taxon>
        <taxon>rosids</taxon>
        <taxon>malvids</taxon>
        <taxon>Brassicales</taxon>
        <taxon>Brassicaceae</taxon>
        <taxon>Camelineae</taxon>
        <taxon>Arabidopsis</taxon>
    </lineage>
</organism>